<protein>
    <recommendedName>
        <fullName evidence="5">4-hydroxy-3-methylbut-2-enyl diphosphate reductase, chloroplastic</fullName>
        <shortName evidence="4">BbHDR</shortName>
        <ecNumber evidence="6">1.17.7.4</ecNumber>
    </recommendedName>
</protein>
<accession>A0A2Z5WA18</accession>
<organism>
    <name type="scientific">Botryococcus braunii</name>
    <name type="common">Green alga</name>
    <dbReference type="NCBI Taxonomy" id="38881"/>
    <lineage>
        <taxon>Eukaryota</taxon>
        <taxon>Viridiplantae</taxon>
        <taxon>Chlorophyta</taxon>
        <taxon>core chlorophytes</taxon>
        <taxon>Trebouxiophyceae</taxon>
        <taxon>Trebouxiophyceae incertae sedis</taxon>
        <taxon>Elliptochloris clade</taxon>
        <taxon>Botryococcus</taxon>
    </lineage>
</organism>
<proteinExistence type="evidence at protein level"/>
<feature type="transit peptide" description="Chloroplast" evidence="3">
    <location>
        <begin position="1"/>
        <end position="48"/>
    </location>
</feature>
<feature type="chain" id="PRO_0000446507" description="4-hydroxy-3-methylbut-2-enyl diphosphate reductase, chloroplastic">
    <location>
        <begin position="49"/>
        <end position="502"/>
    </location>
</feature>
<feature type="active site" description="Proton donor" evidence="1">
    <location>
        <position position="262"/>
    </location>
</feature>
<feature type="binding site" evidence="1">
    <location>
        <position position="140"/>
    </location>
    <ligand>
        <name>[4Fe-4S] cluster</name>
        <dbReference type="ChEBI" id="CHEBI:49883"/>
    </ligand>
</feature>
<feature type="binding site" evidence="1">
    <location>
        <position position="170"/>
    </location>
    <ligand>
        <name>(2E)-4-hydroxy-3-methylbut-2-enyl diphosphate</name>
        <dbReference type="ChEBI" id="CHEBI:128753"/>
    </ligand>
</feature>
<feature type="binding site" evidence="1">
    <location>
        <position position="232"/>
    </location>
    <ligand>
        <name>[4Fe-4S] cluster</name>
        <dbReference type="ChEBI" id="CHEBI:49883"/>
    </ligand>
</feature>
<feature type="binding site" evidence="1">
    <location>
        <position position="260"/>
    </location>
    <ligand>
        <name>(2E)-4-hydroxy-3-methylbut-2-enyl diphosphate</name>
        <dbReference type="ChEBI" id="CHEBI:128753"/>
    </ligand>
</feature>
<feature type="binding site" evidence="1">
    <location>
        <position position="325"/>
    </location>
    <ligand>
        <name>(2E)-4-hydroxy-3-methylbut-2-enyl diphosphate</name>
        <dbReference type="ChEBI" id="CHEBI:128753"/>
    </ligand>
</feature>
<feature type="binding site" evidence="1">
    <location>
        <position position="363"/>
    </location>
    <ligand>
        <name>[4Fe-4S] cluster</name>
        <dbReference type="ChEBI" id="CHEBI:49883"/>
    </ligand>
</feature>
<feature type="binding site" evidence="1">
    <location>
        <begin position="398"/>
        <end position="400"/>
    </location>
    <ligand>
        <name>(2E)-4-hydroxy-3-methylbut-2-enyl diphosphate</name>
        <dbReference type="ChEBI" id="CHEBI:128753"/>
    </ligand>
</feature>
<feature type="binding site" evidence="1">
    <location>
        <position position="461"/>
    </location>
    <ligand>
        <name>(2E)-4-hydroxy-3-methylbut-2-enyl diphosphate</name>
        <dbReference type="ChEBI" id="CHEBI:128753"/>
    </ligand>
</feature>
<sequence length="502" mass="55640">MQVLPQTRVQGVPSGRNLSCSKAVGGTPLRALTRDVVRPARSVNVHVVADGESADDVLLRSSSVAVAEKPKVSGRAFRRSLKDTGRYVAKPINDKDSLDLMEEHGVGYSSVGLVAQMRANNNEWRFKDIRVKLASAYGYCWGVERAVQMAYEAKKKYPDRQIHLTNEIIHNPTVNERMTEMDINIIEQKENGSKDFSKVSRQDVVILPAFGASVQELSLLKDLEVQIVDTTCPWVSKVWTAVDNQARKAHTSVIHGKYSHEETIATASFAETYLIVRDIEEANYVCNYILNGGNKEEFLTKFKNAISKGFDPDRDLARVGLANQTTMLRDETMAIGKLLEKTMIQKHGPAAIKEHFMVMDTICDATQERQDAVYQLVGQQDNPAEKLDLILVVGGFNSSNTSHLQEIPELKNIPSFWVNEAACIDPVNKKITHRTAHGTMLDTQNWLPDGPVTIGVTSGASTPDRAVEEVLEAVFKTRDASFGGIAPNYDLGTAPVVRHEEH</sequence>
<gene>
    <name evidence="4" type="primary">HDR</name>
    <name evidence="7" type="synonym">IspH</name>
    <name evidence="7" type="synonym">LytB</name>
</gene>
<name>ISPH_BOTBR</name>
<dbReference type="EC" id="1.17.7.4" evidence="6"/>
<dbReference type="EMBL" id="LC090196">
    <property type="protein sequence ID" value="BBB76027.1"/>
    <property type="molecule type" value="mRNA"/>
</dbReference>
<dbReference type="EMBL" id="LC105995">
    <property type="protein sequence ID" value="BBB76028.1"/>
    <property type="molecule type" value="Genomic_DNA"/>
</dbReference>
<dbReference type="SMR" id="A0A2Z5WA18"/>
<dbReference type="UniPathway" id="UPA00056">
    <property type="reaction ID" value="UER00097"/>
</dbReference>
<dbReference type="UniPathway" id="UPA00059">
    <property type="reaction ID" value="UER00105"/>
</dbReference>
<dbReference type="GO" id="GO:0009570">
    <property type="term" value="C:chloroplast stroma"/>
    <property type="evidence" value="ECO:0007669"/>
    <property type="project" value="UniProtKB-SubCell"/>
</dbReference>
<dbReference type="GO" id="GO:0051539">
    <property type="term" value="F:4 iron, 4 sulfur cluster binding"/>
    <property type="evidence" value="ECO:0007669"/>
    <property type="project" value="UniProtKB-KW"/>
</dbReference>
<dbReference type="GO" id="GO:0051745">
    <property type="term" value="F:4-hydroxy-3-methylbut-2-enyl diphosphate reductase activity"/>
    <property type="evidence" value="ECO:0007669"/>
    <property type="project" value="UniProtKB-EC"/>
</dbReference>
<dbReference type="GO" id="GO:0046872">
    <property type="term" value="F:metal ion binding"/>
    <property type="evidence" value="ECO:0007669"/>
    <property type="project" value="UniProtKB-KW"/>
</dbReference>
<dbReference type="GO" id="GO:0050992">
    <property type="term" value="P:dimethylallyl diphosphate biosynthetic process"/>
    <property type="evidence" value="ECO:0007669"/>
    <property type="project" value="UniProtKB-UniPathway"/>
</dbReference>
<dbReference type="GO" id="GO:0019288">
    <property type="term" value="P:isopentenyl diphosphate biosynthetic process, methylerythritol 4-phosphate pathway"/>
    <property type="evidence" value="ECO:0007669"/>
    <property type="project" value="UniProtKB-UniPathway"/>
</dbReference>
<dbReference type="CDD" id="cd13944">
    <property type="entry name" value="lytB_ispH"/>
    <property type="match status" value="1"/>
</dbReference>
<dbReference type="Gene3D" id="3.40.50.11270">
    <property type="match status" value="1"/>
</dbReference>
<dbReference type="Gene3D" id="3.40.1010.20">
    <property type="entry name" value="4-hydroxy-3-methylbut-2-enyl diphosphate reductase, catalytic domain"/>
    <property type="match status" value="2"/>
</dbReference>
<dbReference type="HAMAP" id="MF_00191">
    <property type="entry name" value="IspH"/>
    <property type="match status" value="1"/>
</dbReference>
<dbReference type="InterPro" id="IPR003451">
    <property type="entry name" value="LytB/IspH"/>
</dbReference>
<dbReference type="NCBIfam" id="TIGR00216">
    <property type="entry name" value="ispH_lytB"/>
    <property type="match status" value="1"/>
</dbReference>
<dbReference type="NCBIfam" id="NF009911">
    <property type="entry name" value="PRK13371.1"/>
    <property type="match status" value="1"/>
</dbReference>
<dbReference type="PANTHER" id="PTHR31619">
    <property type="entry name" value="4-HYDROXY-3-METHYLBUT-2-ENYL DIPHOSPHATE REDUCTASE, CHLOROPLASTIC"/>
    <property type="match status" value="1"/>
</dbReference>
<dbReference type="PANTHER" id="PTHR31619:SF5">
    <property type="entry name" value="4-HYDROXY-3-METHYLBUT-2-ENYL DIPHOSPHATE REDUCTASE, CHLOROPLASTIC"/>
    <property type="match status" value="1"/>
</dbReference>
<dbReference type="Pfam" id="PF02401">
    <property type="entry name" value="LYTB"/>
    <property type="match status" value="1"/>
</dbReference>
<comment type="function">
    <text evidence="6">Enzyme of the plastid non-mevalonate pathway for isoprenoid biosynthesis that converts 1-hydroxy-2-methyl-2-(E)-butenyl 4-diphosphate into isopentenyl diphosphate (IPP) and dimethylallyl diphosphate (DMAPP).</text>
</comment>
<comment type="catalytic activity">
    <reaction evidence="6">
        <text>dimethylallyl diphosphate + 2 oxidized [2Fe-2S]-[ferredoxin] + H2O = (2E)-4-hydroxy-3-methylbut-2-enyl diphosphate + 2 reduced [2Fe-2S]-[ferredoxin] + 2 H(+)</text>
        <dbReference type="Rhea" id="RHEA:24825"/>
        <dbReference type="Rhea" id="RHEA-COMP:10000"/>
        <dbReference type="Rhea" id="RHEA-COMP:10001"/>
        <dbReference type="ChEBI" id="CHEBI:15377"/>
        <dbReference type="ChEBI" id="CHEBI:15378"/>
        <dbReference type="ChEBI" id="CHEBI:33737"/>
        <dbReference type="ChEBI" id="CHEBI:33738"/>
        <dbReference type="ChEBI" id="CHEBI:57623"/>
        <dbReference type="ChEBI" id="CHEBI:128753"/>
        <dbReference type="EC" id="1.17.7.4"/>
    </reaction>
</comment>
<comment type="catalytic activity">
    <reaction evidence="6">
        <text>isopentenyl diphosphate + 2 oxidized [2Fe-2S]-[ferredoxin] + H2O = (2E)-4-hydroxy-3-methylbut-2-enyl diphosphate + 2 reduced [2Fe-2S]-[ferredoxin] + 2 H(+)</text>
        <dbReference type="Rhea" id="RHEA:24488"/>
        <dbReference type="Rhea" id="RHEA-COMP:10000"/>
        <dbReference type="Rhea" id="RHEA-COMP:10001"/>
        <dbReference type="ChEBI" id="CHEBI:15377"/>
        <dbReference type="ChEBI" id="CHEBI:15378"/>
        <dbReference type="ChEBI" id="CHEBI:33737"/>
        <dbReference type="ChEBI" id="CHEBI:33738"/>
        <dbReference type="ChEBI" id="CHEBI:128753"/>
        <dbReference type="ChEBI" id="CHEBI:128769"/>
        <dbReference type="EC" id="1.17.7.4"/>
    </reaction>
</comment>
<comment type="cofactor">
    <cofactor evidence="1">
        <name>[4Fe-4S] cluster</name>
        <dbReference type="ChEBI" id="CHEBI:49883"/>
    </cofactor>
    <text evidence="1">Binds 1 [4Fe-4S] cluster per subunit.</text>
</comment>
<comment type="pathway">
    <text evidence="5">Isoprenoid biosynthesis; dimethylallyl diphosphate biosynthesis; dimethylallyl diphosphate from (2E)-4-hydroxy-3-methylbutenyl diphosphate: step 1/1.</text>
</comment>
<comment type="pathway">
    <text evidence="5">Isoprenoid biosynthesis; isopentenyl diphosphate biosynthesis via DXP pathway; isopentenyl diphosphate from 1-deoxy-D-xylulose 5-phosphate: step 6/6.</text>
</comment>
<comment type="subunit">
    <text evidence="1">Homodimer.</text>
</comment>
<comment type="subcellular location">
    <subcellularLocation>
        <location evidence="2">Plastid</location>
        <location evidence="2">Chloroplast stroma</location>
    </subcellularLocation>
</comment>
<comment type="similarity">
    <text evidence="5">Belongs to the IspH family.</text>
</comment>
<keyword id="KW-0004">4Fe-4S</keyword>
<keyword id="KW-0150">Chloroplast</keyword>
<keyword id="KW-0408">Iron</keyword>
<keyword id="KW-0411">Iron-sulfur</keyword>
<keyword id="KW-0414">Isoprene biosynthesis</keyword>
<keyword id="KW-0479">Metal-binding</keyword>
<keyword id="KW-0560">Oxidoreductase</keyword>
<keyword id="KW-0934">Plastid</keyword>
<keyword id="KW-0809">Transit peptide</keyword>
<evidence type="ECO:0000250" key="1">
    <source>
        <dbReference type="UniProtKB" id="P62623"/>
    </source>
</evidence>
<evidence type="ECO:0000250" key="2">
    <source>
        <dbReference type="UniProtKB" id="Q94B35"/>
    </source>
</evidence>
<evidence type="ECO:0000255" key="3"/>
<evidence type="ECO:0000303" key="4">
    <source>
    </source>
</evidence>
<evidence type="ECO:0000305" key="5"/>
<evidence type="ECO:0000305" key="6">
    <source>
    </source>
</evidence>
<evidence type="ECO:0000312" key="7">
    <source>
        <dbReference type="EMBL" id="BBB76028.1"/>
    </source>
</evidence>
<reference key="1">
    <citation type="journal article" date="2018" name="J. Plant Res.">
        <title>Isolation and characterization of 4-hydroxy-3-methylbut-2-enyl diphosphate reductase gene from Botryococcus braunii, race B.</title>
        <authorList>
            <person name="Uchida H."/>
            <person name="Sumimoto K."/>
            <person name="Oki T."/>
            <person name="Nishii I."/>
            <person name="Mizohata E."/>
            <person name="Matsunaga S."/>
            <person name="Okada S."/>
        </authorList>
    </citation>
    <scope>NUCLEOTIDE SEQUENCE [GENOMIC DNA / MRNA]</scope>
    <scope>FUNCTION</scope>
    <scope>CATALYTIC ACTIVITY</scope>
    <source>
        <strain>Race B</strain>
    </source>
</reference>